<reference key="1">
    <citation type="journal article" date="2009" name="Genome Res.">
        <title>Complete genome of the cellulolytic thermophile Acidothermus cellulolyticus 11B provides insights into its ecophysiological and evolutionary adaptations.</title>
        <authorList>
            <person name="Barabote R.D."/>
            <person name="Xie G."/>
            <person name="Leu D.H."/>
            <person name="Normand P."/>
            <person name="Necsulea A."/>
            <person name="Daubin V."/>
            <person name="Medigue C."/>
            <person name="Adney W.S."/>
            <person name="Xu X.C."/>
            <person name="Lapidus A."/>
            <person name="Parales R.E."/>
            <person name="Detter C."/>
            <person name="Pujic P."/>
            <person name="Bruce D."/>
            <person name="Lavire C."/>
            <person name="Challacombe J.F."/>
            <person name="Brettin T.S."/>
            <person name="Berry A.M."/>
        </authorList>
    </citation>
    <scope>NUCLEOTIDE SEQUENCE [LARGE SCALE GENOMIC DNA]</scope>
    <source>
        <strain>ATCC 43068 / DSM 8971 / 11B</strain>
    </source>
</reference>
<comment type="function">
    <text evidence="1">One of the essential components for the initiation of protein synthesis. Stabilizes the binding of IF-2 and IF-3 on the 30S subunit to which N-formylmethionyl-tRNA(fMet) subsequently binds. Helps modulate mRNA selection, yielding the 30S pre-initiation complex (PIC). Upon addition of the 50S ribosomal subunit IF-1, IF-2 and IF-3 are released leaving the mature 70S translation initiation complex.</text>
</comment>
<comment type="subunit">
    <text evidence="1">Component of the 30S ribosomal translation pre-initiation complex which assembles on the 30S ribosome in the order IF-2 and IF-3, IF-1 and N-formylmethionyl-tRNA(fMet); mRNA recruitment can occur at any time during PIC assembly.</text>
</comment>
<comment type="subcellular location">
    <subcellularLocation>
        <location evidence="1">Cytoplasm</location>
    </subcellularLocation>
</comment>
<comment type="similarity">
    <text evidence="1">Belongs to the IF-1 family.</text>
</comment>
<organism>
    <name type="scientific">Acidothermus cellulolyticus (strain ATCC 43068 / DSM 8971 / 11B)</name>
    <dbReference type="NCBI Taxonomy" id="351607"/>
    <lineage>
        <taxon>Bacteria</taxon>
        <taxon>Bacillati</taxon>
        <taxon>Actinomycetota</taxon>
        <taxon>Actinomycetes</taxon>
        <taxon>Acidothermales</taxon>
        <taxon>Acidothermaceae</taxon>
        <taxon>Acidothermus</taxon>
    </lineage>
</organism>
<protein>
    <recommendedName>
        <fullName evidence="1">Translation initiation factor IF-1</fullName>
    </recommendedName>
</protein>
<dbReference type="EMBL" id="CP000481">
    <property type="protein sequence ID" value="ABK52103.1"/>
    <property type="molecule type" value="Genomic_DNA"/>
</dbReference>
<dbReference type="RefSeq" id="WP_011719166.1">
    <property type="nucleotide sequence ID" value="NC_008578.1"/>
</dbReference>
<dbReference type="SMR" id="A0LRP3"/>
<dbReference type="FunCoup" id="A0LRP3">
    <property type="interactions" value="62"/>
</dbReference>
<dbReference type="STRING" id="351607.Acel_0329"/>
<dbReference type="KEGG" id="ace:Acel_0329"/>
<dbReference type="eggNOG" id="COG0361">
    <property type="taxonomic scope" value="Bacteria"/>
</dbReference>
<dbReference type="HOGENOM" id="CLU_151267_1_0_11"/>
<dbReference type="InParanoid" id="A0LRP3"/>
<dbReference type="OrthoDB" id="9803250at2"/>
<dbReference type="Proteomes" id="UP000008221">
    <property type="component" value="Chromosome"/>
</dbReference>
<dbReference type="GO" id="GO:0005829">
    <property type="term" value="C:cytosol"/>
    <property type="evidence" value="ECO:0007669"/>
    <property type="project" value="TreeGrafter"/>
</dbReference>
<dbReference type="GO" id="GO:0043022">
    <property type="term" value="F:ribosome binding"/>
    <property type="evidence" value="ECO:0007669"/>
    <property type="project" value="UniProtKB-UniRule"/>
</dbReference>
<dbReference type="GO" id="GO:0019843">
    <property type="term" value="F:rRNA binding"/>
    <property type="evidence" value="ECO:0007669"/>
    <property type="project" value="UniProtKB-UniRule"/>
</dbReference>
<dbReference type="GO" id="GO:0003743">
    <property type="term" value="F:translation initiation factor activity"/>
    <property type="evidence" value="ECO:0007669"/>
    <property type="project" value="UniProtKB-UniRule"/>
</dbReference>
<dbReference type="CDD" id="cd04451">
    <property type="entry name" value="S1_IF1"/>
    <property type="match status" value="1"/>
</dbReference>
<dbReference type="FunFam" id="2.40.50.140:FF:000002">
    <property type="entry name" value="Translation initiation factor IF-1"/>
    <property type="match status" value="1"/>
</dbReference>
<dbReference type="Gene3D" id="2.40.50.140">
    <property type="entry name" value="Nucleic acid-binding proteins"/>
    <property type="match status" value="1"/>
</dbReference>
<dbReference type="HAMAP" id="MF_00075">
    <property type="entry name" value="IF_1"/>
    <property type="match status" value="1"/>
</dbReference>
<dbReference type="InterPro" id="IPR012340">
    <property type="entry name" value="NA-bd_OB-fold"/>
</dbReference>
<dbReference type="InterPro" id="IPR006196">
    <property type="entry name" value="RNA-binding_domain_S1_IF1"/>
</dbReference>
<dbReference type="InterPro" id="IPR003029">
    <property type="entry name" value="S1_domain"/>
</dbReference>
<dbReference type="InterPro" id="IPR004368">
    <property type="entry name" value="TIF_IF1"/>
</dbReference>
<dbReference type="NCBIfam" id="TIGR00008">
    <property type="entry name" value="infA"/>
    <property type="match status" value="1"/>
</dbReference>
<dbReference type="PANTHER" id="PTHR33370">
    <property type="entry name" value="TRANSLATION INITIATION FACTOR IF-1, CHLOROPLASTIC"/>
    <property type="match status" value="1"/>
</dbReference>
<dbReference type="PANTHER" id="PTHR33370:SF1">
    <property type="entry name" value="TRANSLATION INITIATION FACTOR IF-1, CHLOROPLASTIC"/>
    <property type="match status" value="1"/>
</dbReference>
<dbReference type="Pfam" id="PF01176">
    <property type="entry name" value="eIF-1a"/>
    <property type="match status" value="1"/>
</dbReference>
<dbReference type="SMART" id="SM00316">
    <property type="entry name" value="S1"/>
    <property type="match status" value="1"/>
</dbReference>
<dbReference type="SUPFAM" id="SSF50249">
    <property type="entry name" value="Nucleic acid-binding proteins"/>
    <property type="match status" value="1"/>
</dbReference>
<dbReference type="PROSITE" id="PS50832">
    <property type="entry name" value="S1_IF1_TYPE"/>
    <property type="match status" value="1"/>
</dbReference>
<sequence>MAKKDGVIEIEGQVIEPLPNAMFRVELANGHKVLAHISGKMRMHYIRILPGDRVVVELSPYDLNRGRIVYRYR</sequence>
<name>IF1_ACIC1</name>
<feature type="chain" id="PRO_0000338744" description="Translation initiation factor IF-1">
    <location>
        <begin position="1"/>
        <end position="73"/>
    </location>
</feature>
<feature type="domain" description="S1-like" evidence="1">
    <location>
        <begin position="1"/>
        <end position="73"/>
    </location>
</feature>
<gene>
    <name evidence="1" type="primary">infA</name>
    <name type="ordered locus">Acel_0329</name>
</gene>
<proteinExistence type="inferred from homology"/>
<accession>A0LRP3</accession>
<keyword id="KW-0963">Cytoplasm</keyword>
<keyword id="KW-0396">Initiation factor</keyword>
<keyword id="KW-0648">Protein biosynthesis</keyword>
<keyword id="KW-1185">Reference proteome</keyword>
<keyword id="KW-0694">RNA-binding</keyword>
<keyword id="KW-0699">rRNA-binding</keyword>
<evidence type="ECO:0000255" key="1">
    <source>
        <dbReference type="HAMAP-Rule" id="MF_00075"/>
    </source>
</evidence>